<proteinExistence type="inferred from homology"/>
<dbReference type="EMBL" id="DQ424856">
    <property type="protein sequence ID" value="ABE47527.1"/>
    <property type="molecule type" value="Genomic_DNA"/>
</dbReference>
<dbReference type="RefSeq" id="YP_567069.1">
    <property type="nucleotide sequence ID" value="NC_007957.1"/>
</dbReference>
<dbReference type="SMR" id="Q0ZJ27"/>
<dbReference type="FunCoup" id="Q0ZJ27">
    <property type="interactions" value="38"/>
</dbReference>
<dbReference type="STRING" id="29760.Q0ZJ27"/>
<dbReference type="GeneID" id="4025101"/>
<dbReference type="KEGG" id="vvi:4025101"/>
<dbReference type="InParanoid" id="Q0ZJ27"/>
<dbReference type="Proteomes" id="UP000009183">
    <property type="component" value="Chloroplast"/>
</dbReference>
<dbReference type="GO" id="GO:0009535">
    <property type="term" value="C:chloroplast thylakoid membrane"/>
    <property type="evidence" value="ECO:0007669"/>
    <property type="project" value="UniProtKB-SubCell"/>
</dbReference>
<dbReference type="GO" id="GO:0009512">
    <property type="term" value="C:cytochrome b6f complex"/>
    <property type="evidence" value="ECO:0007669"/>
    <property type="project" value="InterPro"/>
</dbReference>
<dbReference type="GO" id="GO:0045158">
    <property type="term" value="F:electron transporter, transferring electrons within cytochrome b6/f complex of photosystem II activity"/>
    <property type="evidence" value="ECO:0007669"/>
    <property type="project" value="InterPro"/>
</dbReference>
<dbReference type="GO" id="GO:0017004">
    <property type="term" value="P:cytochrome complex assembly"/>
    <property type="evidence" value="ECO:0007669"/>
    <property type="project" value="UniProtKB-UniRule"/>
</dbReference>
<dbReference type="GO" id="GO:0015979">
    <property type="term" value="P:photosynthesis"/>
    <property type="evidence" value="ECO:0007669"/>
    <property type="project" value="UniProtKB-KW"/>
</dbReference>
<dbReference type="HAMAP" id="MF_00395">
    <property type="entry name" value="Cytb6_f_PetN"/>
    <property type="match status" value="1"/>
</dbReference>
<dbReference type="InterPro" id="IPR036143">
    <property type="entry name" value="Cytochr_b6-f_cplx_su8_sf"/>
</dbReference>
<dbReference type="InterPro" id="IPR005497">
    <property type="entry name" value="Cytochrome_b6-f_cplx_su8"/>
</dbReference>
<dbReference type="Pfam" id="PF03742">
    <property type="entry name" value="PetN"/>
    <property type="match status" value="1"/>
</dbReference>
<dbReference type="SUPFAM" id="SSF103451">
    <property type="entry name" value="PetN subunit of the cytochrome b6f complex"/>
    <property type="match status" value="1"/>
</dbReference>
<gene>
    <name evidence="1" type="primary">petN</name>
</gene>
<name>PETN_VITVI</name>
<reference key="1">
    <citation type="journal article" date="2006" name="BMC Evol. Biol.">
        <title>Phylogenetic analyses of Vitis (Vitaceae) based on complete chloroplast genome sequences: effects of taxon sampling and phylogenetic methods on resolving relationships among rosids.</title>
        <authorList>
            <person name="Jansen R.K."/>
            <person name="Kaittanis C."/>
            <person name="Lee S.-B."/>
            <person name="Saski C."/>
            <person name="Tomkins J."/>
            <person name="Alverson A.J."/>
            <person name="Daniell H."/>
        </authorList>
    </citation>
    <scope>NUCLEOTIDE SEQUENCE [LARGE SCALE GENOMIC DNA]</scope>
    <source>
        <strain>cv. Maxxa</strain>
    </source>
</reference>
<comment type="function">
    <text evidence="1">Component of the cytochrome b6-f complex, which mediates electron transfer between photosystem II (PSII) and photosystem I (PSI), cyclic electron flow around PSI, and state transitions.</text>
</comment>
<comment type="subunit">
    <text evidence="1">The 4 large subunits of the cytochrome b6-f complex are cytochrome b6, subunit IV (17 kDa polypeptide, PetD), cytochrome f and the Rieske protein, while the 4 small subunits are PetG, PetL, PetM and PetN. The complex functions as a dimer.</text>
</comment>
<comment type="subcellular location">
    <subcellularLocation>
        <location>Plastid</location>
        <location>Chloroplast thylakoid membrane</location>
        <topology>Single-pass membrane protein</topology>
    </subcellularLocation>
</comment>
<comment type="similarity">
    <text evidence="1">Belongs to the PetN family.</text>
</comment>
<geneLocation type="chloroplast"/>
<feature type="chain" id="PRO_0000275569" description="Cytochrome b6-f complex subunit 8">
    <location>
        <begin position="1"/>
        <end position="29"/>
    </location>
</feature>
<feature type="transmembrane region" description="Helical" evidence="1">
    <location>
        <begin position="3"/>
        <end position="23"/>
    </location>
</feature>
<evidence type="ECO:0000255" key="1">
    <source>
        <dbReference type="HAMAP-Rule" id="MF_00395"/>
    </source>
</evidence>
<accession>Q0ZJ27</accession>
<keyword id="KW-0150">Chloroplast</keyword>
<keyword id="KW-0249">Electron transport</keyword>
<keyword id="KW-0472">Membrane</keyword>
<keyword id="KW-0602">Photosynthesis</keyword>
<keyword id="KW-0934">Plastid</keyword>
<keyword id="KW-1185">Reference proteome</keyword>
<keyword id="KW-0793">Thylakoid</keyword>
<keyword id="KW-0812">Transmembrane</keyword>
<keyword id="KW-1133">Transmembrane helix</keyword>
<keyword id="KW-0813">Transport</keyword>
<protein>
    <recommendedName>
        <fullName evidence="1">Cytochrome b6-f complex subunit 8</fullName>
    </recommendedName>
    <alternativeName>
        <fullName evidence="1">Cytochrome b6-f complex subunit PetN</fullName>
    </alternativeName>
    <alternativeName>
        <fullName evidence="1">Cytochrome b6-f complex subunit VIII</fullName>
    </alternativeName>
</protein>
<sequence length="29" mass="3170">MDIVSLAWAALMVVFTFSLSLVVWGRSGL</sequence>
<organism>
    <name type="scientific">Vitis vinifera</name>
    <name type="common">Grape</name>
    <dbReference type="NCBI Taxonomy" id="29760"/>
    <lineage>
        <taxon>Eukaryota</taxon>
        <taxon>Viridiplantae</taxon>
        <taxon>Streptophyta</taxon>
        <taxon>Embryophyta</taxon>
        <taxon>Tracheophyta</taxon>
        <taxon>Spermatophyta</taxon>
        <taxon>Magnoliopsida</taxon>
        <taxon>eudicotyledons</taxon>
        <taxon>Gunneridae</taxon>
        <taxon>Pentapetalae</taxon>
        <taxon>rosids</taxon>
        <taxon>Vitales</taxon>
        <taxon>Vitaceae</taxon>
        <taxon>Viteae</taxon>
        <taxon>Vitis</taxon>
    </lineage>
</organism>